<reference key="1">
    <citation type="journal article" date="1999" name="Nature">
        <title>Evidence for lateral gene transfer between Archaea and Bacteria from genome sequence of Thermotoga maritima.</title>
        <authorList>
            <person name="Nelson K.E."/>
            <person name="Clayton R.A."/>
            <person name="Gill S.R."/>
            <person name="Gwinn M.L."/>
            <person name="Dodson R.J."/>
            <person name="Haft D.H."/>
            <person name="Hickey E.K."/>
            <person name="Peterson J.D."/>
            <person name="Nelson W.C."/>
            <person name="Ketchum K.A."/>
            <person name="McDonald L.A."/>
            <person name="Utterback T.R."/>
            <person name="Malek J.A."/>
            <person name="Linher K.D."/>
            <person name="Garrett M.M."/>
            <person name="Stewart A.M."/>
            <person name="Cotton M.D."/>
            <person name="Pratt M.S."/>
            <person name="Phillips C.A."/>
            <person name="Richardson D.L."/>
            <person name="Heidelberg J.F."/>
            <person name="Sutton G.G."/>
            <person name="Fleischmann R.D."/>
            <person name="Eisen J.A."/>
            <person name="White O."/>
            <person name="Salzberg S.L."/>
            <person name="Smith H.O."/>
            <person name="Venter J.C."/>
            <person name="Fraser C.M."/>
        </authorList>
    </citation>
    <scope>NUCLEOTIDE SEQUENCE [LARGE SCALE GENOMIC DNA]</scope>
    <source>
        <strain>ATCC 43589 / DSM 3109 / JCM 10099 / NBRC 100826 / MSB8</strain>
    </source>
</reference>
<evidence type="ECO:0000255" key="1">
    <source>
        <dbReference type="HAMAP-Rule" id="MF_01077"/>
    </source>
</evidence>
<accession>Q9X299</accession>
<gene>
    <name evidence="1" type="primary">rimP</name>
    <name type="ordered locus">TM_1778</name>
</gene>
<organism>
    <name type="scientific">Thermotoga maritima (strain ATCC 43589 / DSM 3109 / JCM 10099 / NBRC 100826 / MSB8)</name>
    <dbReference type="NCBI Taxonomy" id="243274"/>
    <lineage>
        <taxon>Bacteria</taxon>
        <taxon>Thermotogati</taxon>
        <taxon>Thermotogota</taxon>
        <taxon>Thermotogae</taxon>
        <taxon>Thermotogales</taxon>
        <taxon>Thermotogaceae</taxon>
        <taxon>Thermotoga</taxon>
    </lineage>
</organism>
<proteinExistence type="inferred from homology"/>
<sequence length="150" mass="17744">MFEEMILEKVRKEAERIAEEQGLEIFDVQYRRESRGWVLRIIIDNPVGYVSVRDCELFSREMERFLDREDFIEHSYTLEVSSPGLDRPLRGPRDYVRFTGKLAKIVTKDGKTFIGRIESFVDGTITISDEKRKYEINIDDVKRANLEVEF</sequence>
<keyword id="KW-0963">Cytoplasm</keyword>
<keyword id="KW-1185">Reference proteome</keyword>
<keyword id="KW-0690">Ribosome biogenesis</keyword>
<name>RIMP_THEMA</name>
<dbReference type="EMBL" id="AE000512">
    <property type="protein sequence ID" value="AAD36841.1"/>
    <property type="molecule type" value="Genomic_DNA"/>
</dbReference>
<dbReference type="PIR" id="A72214">
    <property type="entry name" value="A72214"/>
</dbReference>
<dbReference type="RefSeq" id="NP_229575.1">
    <property type="nucleotide sequence ID" value="NC_000853.1"/>
</dbReference>
<dbReference type="RefSeq" id="WP_004082324.1">
    <property type="nucleotide sequence ID" value="NC_000853.1"/>
</dbReference>
<dbReference type="SMR" id="Q9X299"/>
<dbReference type="FunCoup" id="Q9X299">
    <property type="interactions" value="243"/>
</dbReference>
<dbReference type="STRING" id="243274.TM_1778"/>
<dbReference type="PaxDb" id="243274-THEMA_05315"/>
<dbReference type="EnsemblBacteria" id="AAD36841">
    <property type="protein sequence ID" value="AAD36841"/>
    <property type="gene ID" value="TM_1778"/>
</dbReference>
<dbReference type="KEGG" id="tma:TM1778"/>
<dbReference type="KEGG" id="tmi:THEMA_05315"/>
<dbReference type="KEGG" id="tmm:Tmari_1788"/>
<dbReference type="KEGG" id="tmw:THMA_1822"/>
<dbReference type="eggNOG" id="COG0779">
    <property type="taxonomic scope" value="Bacteria"/>
</dbReference>
<dbReference type="InParanoid" id="Q9X299"/>
<dbReference type="OrthoDB" id="9805006at2"/>
<dbReference type="Proteomes" id="UP000008183">
    <property type="component" value="Chromosome"/>
</dbReference>
<dbReference type="GO" id="GO:0005829">
    <property type="term" value="C:cytosol"/>
    <property type="evidence" value="ECO:0000318"/>
    <property type="project" value="GO_Central"/>
</dbReference>
<dbReference type="GO" id="GO:0000028">
    <property type="term" value="P:ribosomal small subunit assembly"/>
    <property type="evidence" value="ECO:0000318"/>
    <property type="project" value="GO_Central"/>
</dbReference>
<dbReference type="GO" id="GO:0006412">
    <property type="term" value="P:translation"/>
    <property type="evidence" value="ECO:0000318"/>
    <property type="project" value="GO_Central"/>
</dbReference>
<dbReference type="CDD" id="cd01734">
    <property type="entry name" value="YlxS_C"/>
    <property type="match status" value="1"/>
</dbReference>
<dbReference type="FunFam" id="3.30.300.70:FF:000001">
    <property type="entry name" value="Ribosome maturation factor RimP"/>
    <property type="match status" value="1"/>
</dbReference>
<dbReference type="Gene3D" id="2.30.30.180">
    <property type="entry name" value="Ribosome maturation factor RimP, C-terminal domain"/>
    <property type="match status" value="1"/>
</dbReference>
<dbReference type="Gene3D" id="3.30.300.70">
    <property type="entry name" value="RimP-like superfamily, N-terminal"/>
    <property type="match status" value="1"/>
</dbReference>
<dbReference type="HAMAP" id="MF_01077">
    <property type="entry name" value="RimP"/>
    <property type="match status" value="1"/>
</dbReference>
<dbReference type="InterPro" id="IPR003728">
    <property type="entry name" value="Ribosome_maturation_RimP"/>
</dbReference>
<dbReference type="InterPro" id="IPR028998">
    <property type="entry name" value="RimP_C"/>
</dbReference>
<dbReference type="InterPro" id="IPR036847">
    <property type="entry name" value="RimP_C_sf"/>
</dbReference>
<dbReference type="InterPro" id="IPR028989">
    <property type="entry name" value="RimP_N"/>
</dbReference>
<dbReference type="InterPro" id="IPR035956">
    <property type="entry name" value="RimP_N_sf"/>
</dbReference>
<dbReference type="NCBIfam" id="NF011231">
    <property type="entry name" value="PRK14638.1"/>
    <property type="match status" value="1"/>
</dbReference>
<dbReference type="PANTHER" id="PTHR33867">
    <property type="entry name" value="RIBOSOME MATURATION FACTOR RIMP"/>
    <property type="match status" value="1"/>
</dbReference>
<dbReference type="PANTHER" id="PTHR33867:SF1">
    <property type="entry name" value="RIBOSOME MATURATION FACTOR RIMP"/>
    <property type="match status" value="1"/>
</dbReference>
<dbReference type="Pfam" id="PF17384">
    <property type="entry name" value="DUF150_C"/>
    <property type="match status" value="1"/>
</dbReference>
<dbReference type="Pfam" id="PF02576">
    <property type="entry name" value="RimP_N"/>
    <property type="match status" value="1"/>
</dbReference>
<dbReference type="SUPFAM" id="SSF74942">
    <property type="entry name" value="YhbC-like, C-terminal domain"/>
    <property type="match status" value="1"/>
</dbReference>
<dbReference type="SUPFAM" id="SSF75420">
    <property type="entry name" value="YhbC-like, N-terminal domain"/>
    <property type="match status" value="1"/>
</dbReference>
<protein>
    <recommendedName>
        <fullName evidence="1">Ribosome maturation factor RimP</fullName>
    </recommendedName>
</protein>
<comment type="function">
    <text evidence="1">Required for maturation of 30S ribosomal subunits.</text>
</comment>
<comment type="subcellular location">
    <subcellularLocation>
        <location evidence="1">Cytoplasm</location>
    </subcellularLocation>
</comment>
<comment type="similarity">
    <text evidence="1">Belongs to the RimP family.</text>
</comment>
<feature type="chain" id="PRO_0000181943" description="Ribosome maturation factor RimP">
    <location>
        <begin position="1"/>
        <end position="150"/>
    </location>
</feature>